<accession>P79400</accession>
<proteinExistence type="evidence at transcript level"/>
<comment type="function">
    <text evidence="1">G-protein coupled receptor for 5-hydroxytryptamine (serotonin). Also functions as a receptor for ergot alkaloid derivatives, various anxiolytic and antidepressant drugs and other psychoactive substances. Ligand binding causes a conformation change that triggers signaling via guanine nucleotide-binding proteins (G proteins) and modulates the activity of downstream effectors, such as adenylate cyclase. HTR1D is coupled to G(i)/G(o) G alpha proteins and mediates inhibitory neurotransmission by inhibiting adenylate cyclase activity. Regulates the release of 5-hydroxytryptamine in the brain, and thereby affects neural activity. May also play a role in regulating the release of other neurotransmitters. May play a role in vasoconstriction.</text>
</comment>
<comment type="subunit">
    <text evidence="1">Homodimer. Heterodimer with HTR1B.</text>
</comment>
<comment type="subcellular location">
    <subcellularLocation>
        <location evidence="1">Cell membrane</location>
        <topology evidence="1">Multi-pass membrane protein</topology>
    </subcellularLocation>
</comment>
<comment type="similarity">
    <text evidence="4">Belongs to the G-protein coupled receptor 1 family.</text>
</comment>
<gene>
    <name type="primary">HTR1D</name>
</gene>
<evidence type="ECO:0000250" key="1">
    <source>
        <dbReference type="UniProtKB" id="P28221"/>
    </source>
</evidence>
<evidence type="ECO:0000250" key="2">
    <source>
        <dbReference type="UniProtKB" id="P41595"/>
    </source>
</evidence>
<evidence type="ECO:0000255" key="3"/>
<evidence type="ECO:0000255" key="4">
    <source>
        <dbReference type="PROSITE-ProRule" id="PRU00521"/>
    </source>
</evidence>
<keyword id="KW-1003">Cell membrane</keyword>
<keyword id="KW-1015">Disulfide bond</keyword>
<keyword id="KW-0297">G-protein coupled receptor</keyword>
<keyword id="KW-0325">Glycoprotein</keyword>
<keyword id="KW-0472">Membrane</keyword>
<keyword id="KW-0675">Receptor</keyword>
<keyword id="KW-1185">Reference proteome</keyword>
<keyword id="KW-0807">Transducer</keyword>
<keyword id="KW-0812">Transmembrane</keyword>
<keyword id="KW-1133">Transmembrane helix</keyword>
<feature type="chain" id="PRO_0000068929" description="5-hydroxytryptamine receptor 1D">
    <location>
        <begin position="1" status="less than"/>
        <end position="291" status="greater than"/>
    </location>
</feature>
<feature type="transmembrane region" description="Helical; Name=3" evidence="1">
    <location>
        <begin position="30"/>
        <end position="54"/>
    </location>
</feature>
<feature type="transmembrane region" description="Helical; Name=4" evidence="1">
    <location>
        <begin position="75"/>
        <end position="96"/>
    </location>
</feature>
<feature type="transmembrane region" description="Helical; Name=5" evidence="1">
    <location>
        <begin position="115"/>
        <end position="138"/>
    </location>
</feature>
<feature type="transmembrane region" description="Helical; Name=6" evidence="1">
    <location>
        <begin position="221"/>
        <end position="246"/>
    </location>
</feature>
<feature type="transmembrane region" description="Helical; Name=7" evidence="1">
    <location>
        <begin position="256"/>
        <end position="279"/>
    </location>
</feature>
<feature type="short sequence motif" description="DRY motif; important for ligand-induced conformation changes" evidence="2">
    <location>
        <begin position="55"/>
        <end position="57"/>
    </location>
</feature>
<feature type="short sequence motif" description="NPxxY motif; important for ligand-induced conformation changes and signaling" evidence="2">
    <location>
        <begin position="272"/>
        <end position="276"/>
    </location>
</feature>
<feature type="binding site" evidence="1">
    <location>
        <position position="38"/>
    </location>
    <ligand>
        <name>serotonin</name>
        <dbReference type="ChEBI" id="CHEBI:350546"/>
    </ligand>
</feature>
<feature type="binding site" evidence="1">
    <location>
        <position position="42"/>
    </location>
    <ligand>
        <name>serotonin</name>
        <dbReference type="ChEBI" id="CHEBI:350546"/>
    </ligand>
</feature>
<feature type="binding site" evidence="1">
    <location>
        <position position="241"/>
    </location>
    <ligand>
        <name>serotonin</name>
        <dbReference type="ChEBI" id="CHEBI:350546"/>
    </ligand>
</feature>
<feature type="glycosylation site" description="N-linked (GlcNAc...) asparagine" evidence="3">
    <location>
        <position position="111"/>
    </location>
</feature>
<feature type="disulfide bond" evidence="4">
    <location>
        <begin position="31"/>
        <end position="108"/>
    </location>
</feature>
<feature type="non-terminal residue">
    <location>
        <position position="1"/>
    </location>
</feature>
<feature type="non-terminal residue">
    <location>
        <position position="291"/>
    </location>
</feature>
<protein>
    <recommendedName>
        <fullName>5-hydroxytryptamine receptor 1D</fullName>
        <shortName>5-HT-1D</shortName>
        <shortName>5-HT1D</shortName>
    </recommendedName>
    <alternativeName>
        <fullName>Serotonin receptor 1D</fullName>
    </alternativeName>
</protein>
<dbReference type="EMBL" id="Y11868">
    <property type="protein sequence ID" value="CAA72616.1"/>
    <property type="molecule type" value="mRNA"/>
</dbReference>
<dbReference type="SMR" id="P79400"/>
<dbReference type="FunCoup" id="P79400">
    <property type="interactions" value="31"/>
</dbReference>
<dbReference type="STRING" id="9823.ENSSSCP00000069634"/>
<dbReference type="BindingDB" id="P79400"/>
<dbReference type="ChEMBL" id="CHEMBL4105"/>
<dbReference type="DrugCentral" id="P79400"/>
<dbReference type="GlyCosmos" id="P79400">
    <property type="glycosylation" value="1 site, No reported glycans"/>
</dbReference>
<dbReference type="GlyGen" id="P79400">
    <property type="glycosylation" value="1 site"/>
</dbReference>
<dbReference type="PaxDb" id="9823-ENSSSCP00000020202"/>
<dbReference type="eggNOG" id="KOG3656">
    <property type="taxonomic scope" value="Eukaryota"/>
</dbReference>
<dbReference type="InParanoid" id="P79400"/>
<dbReference type="Proteomes" id="UP000008227">
    <property type="component" value="Unplaced"/>
</dbReference>
<dbReference type="Proteomes" id="UP000314985">
    <property type="component" value="Unplaced"/>
</dbReference>
<dbReference type="Proteomes" id="UP000694570">
    <property type="component" value="Unplaced"/>
</dbReference>
<dbReference type="Proteomes" id="UP000694571">
    <property type="component" value="Unplaced"/>
</dbReference>
<dbReference type="Proteomes" id="UP000694720">
    <property type="component" value="Unplaced"/>
</dbReference>
<dbReference type="Proteomes" id="UP000694722">
    <property type="component" value="Unplaced"/>
</dbReference>
<dbReference type="Proteomes" id="UP000694723">
    <property type="component" value="Unplaced"/>
</dbReference>
<dbReference type="Proteomes" id="UP000694724">
    <property type="component" value="Unplaced"/>
</dbReference>
<dbReference type="Proteomes" id="UP000694725">
    <property type="component" value="Unplaced"/>
</dbReference>
<dbReference type="Proteomes" id="UP000694726">
    <property type="component" value="Unplaced"/>
</dbReference>
<dbReference type="Proteomes" id="UP000694727">
    <property type="component" value="Unplaced"/>
</dbReference>
<dbReference type="Proteomes" id="UP000694728">
    <property type="component" value="Unplaced"/>
</dbReference>
<dbReference type="GO" id="GO:0030425">
    <property type="term" value="C:dendrite"/>
    <property type="evidence" value="ECO:0000318"/>
    <property type="project" value="GO_Central"/>
</dbReference>
<dbReference type="GO" id="GO:0005886">
    <property type="term" value="C:plasma membrane"/>
    <property type="evidence" value="ECO:0000250"/>
    <property type="project" value="UniProtKB"/>
</dbReference>
<dbReference type="GO" id="GO:0045202">
    <property type="term" value="C:synapse"/>
    <property type="evidence" value="ECO:0007669"/>
    <property type="project" value="GOC"/>
</dbReference>
<dbReference type="GO" id="GO:0004993">
    <property type="term" value="F:G protein-coupled serotonin receptor activity"/>
    <property type="evidence" value="ECO:0000250"/>
    <property type="project" value="UniProtKB"/>
</dbReference>
<dbReference type="GO" id="GO:0030594">
    <property type="term" value="F:neurotransmitter receptor activity"/>
    <property type="evidence" value="ECO:0000318"/>
    <property type="project" value="GO_Central"/>
</dbReference>
<dbReference type="GO" id="GO:0007193">
    <property type="term" value="P:adenylate cyclase-inhibiting G protein-coupled receptor signaling pathway"/>
    <property type="evidence" value="ECO:0000250"/>
    <property type="project" value="UniProtKB"/>
</dbReference>
<dbReference type="GO" id="GO:0007198">
    <property type="term" value="P:adenylate cyclase-inhibiting serotonin receptor signaling pathway"/>
    <property type="evidence" value="ECO:0000318"/>
    <property type="project" value="GO_Central"/>
</dbReference>
<dbReference type="GO" id="GO:0007268">
    <property type="term" value="P:chemical synaptic transmission"/>
    <property type="evidence" value="ECO:0000318"/>
    <property type="project" value="GO_Central"/>
</dbReference>
<dbReference type="GO" id="GO:0007187">
    <property type="term" value="P:G protein-coupled receptor signaling pathway, coupled to cyclic nucleotide second messenger"/>
    <property type="evidence" value="ECO:0000318"/>
    <property type="project" value="GO_Central"/>
</dbReference>
<dbReference type="GO" id="GO:0050795">
    <property type="term" value="P:regulation of behavior"/>
    <property type="evidence" value="ECO:0007669"/>
    <property type="project" value="InterPro"/>
</dbReference>
<dbReference type="GO" id="GO:0040012">
    <property type="term" value="P:regulation of locomotion"/>
    <property type="evidence" value="ECO:0007669"/>
    <property type="project" value="InterPro"/>
</dbReference>
<dbReference type="GO" id="GO:0006939">
    <property type="term" value="P:smooth muscle contraction"/>
    <property type="evidence" value="ECO:0007669"/>
    <property type="project" value="InterPro"/>
</dbReference>
<dbReference type="GO" id="GO:0042310">
    <property type="term" value="P:vasoconstriction"/>
    <property type="evidence" value="ECO:0007669"/>
    <property type="project" value="InterPro"/>
</dbReference>
<dbReference type="Gene3D" id="1.20.1070.10">
    <property type="entry name" value="Rhodopsin 7-helix transmembrane proteins"/>
    <property type="match status" value="1"/>
</dbReference>
<dbReference type="InterPro" id="IPR000505">
    <property type="entry name" value="5HT1D_rcpt"/>
</dbReference>
<dbReference type="InterPro" id="IPR002231">
    <property type="entry name" value="5HT_rcpt"/>
</dbReference>
<dbReference type="InterPro" id="IPR000276">
    <property type="entry name" value="GPCR_Rhodpsn"/>
</dbReference>
<dbReference type="InterPro" id="IPR017452">
    <property type="entry name" value="GPCR_Rhodpsn_7TM"/>
</dbReference>
<dbReference type="PANTHER" id="PTHR24248:SF196">
    <property type="entry name" value="5-HYDROXYTRYPTAMINE RECEPTOR 1D"/>
    <property type="match status" value="1"/>
</dbReference>
<dbReference type="PANTHER" id="PTHR24248">
    <property type="entry name" value="ADRENERGIC RECEPTOR-RELATED G-PROTEIN COUPLED RECEPTOR"/>
    <property type="match status" value="1"/>
</dbReference>
<dbReference type="Pfam" id="PF00001">
    <property type="entry name" value="7tm_1"/>
    <property type="match status" value="1"/>
</dbReference>
<dbReference type="PRINTS" id="PR00514">
    <property type="entry name" value="5HT1DRECEPTR"/>
</dbReference>
<dbReference type="PRINTS" id="PR01101">
    <property type="entry name" value="5HTRECEPTOR"/>
</dbReference>
<dbReference type="PRINTS" id="PR00237">
    <property type="entry name" value="GPCRRHODOPSN"/>
</dbReference>
<dbReference type="SUPFAM" id="SSF81321">
    <property type="entry name" value="Family A G protein-coupled receptor-like"/>
    <property type="match status" value="1"/>
</dbReference>
<dbReference type="PROSITE" id="PS00237">
    <property type="entry name" value="G_PROTEIN_RECEP_F1_1"/>
    <property type="match status" value="1"/>
</dbReference>
<dbReference type="PROSITE" id="PS50262">
    <property type="entry name" value="G_PROTEIN_RECEP_F1_2"/>
    <property type="match status" value="1"/>
</dbReference>
<name>5HT1D_PIG</name>
<sequence length="291" mass="32669">AMTDLLVSILVMPISIPYTITQTWSFGQLLCDIWLSSDITCCTASILHLCVIALDRYWAITDALEYSKRRTAGHAAAMIAIVWAISICISIPPLFWRQARAHEEISDCLVNTSQISYTIYSTCGAFYIPSLLLIILYGRIYRAARNRILNPPSLYGKRFTTAHLITGSAGSSLCSLNPSLHEGHSHSAGSPLFFNHVKIKLADSVLERKRISAARERKATKTLGIILGAFIICWLPFFVASLVLPICRDSCWIHPALFDFFTWLGYLNSLINPIIYTVFNEEFRQAFQKVV</sequence>
<organism>
    <name type="scientific">Sus scrofa</name>
    <name type="common">Pig</name>
    <dbReference type="NCBI Taxonomy" id="9823"/>
    <lineage>
        <taxon>Eukaryota</taxon>
        <taxon>Metazoa</taxon>
        <taxon>Chordata</taxon>
        <taxon>Craniata</taxon>
        <taxon>Vertebrata</taxon>
        <taxon>Euteleostomi</taxon>
        <taxon>Mammalia</taxon>
        <taxon>Eutheria</taxon>
        <taxon>Laurasiatheria</taxon>
        <taxon>Artiodactyla</taxon>
        <taxon>Suina</taxon>
        <taxon>Suidae</taxon>
        <taxon>Sus</taxon>
    </lineage>
</organism>
<reference key="1">
    <citation type="submission" date="1997-03" db="EMBL/GenBank/DDBJ databases">
        <authorList>
            <person name="Wurch T."/>
            <person name="Lestienne F."/>
            <person name="Colpaert F.C."/>
            <person name="Pauwels P.J."/>
        </authorList>
    </citation>
    <scope>NUCLEOTIDE SEQUENCE [MRNA]</scope>
    <source>
        <tissue>Brain cortex</tissue>
    </source>
</reference>